<organism>
    <name type="scientific">Escherichia coli O45:K1 (strain S88 / ExPEC)</name>
    <dbReference type="NCBI Taxonomy" id="585035"/>
    <lineage>
        <taxon>Bacteria</taxon>
        <taxon>Pseudomonadati</taxon>
        <taxon>Pseudomonadota</taxon>
        <taxon>Gammaproteobacteria</taxon>
        <taxon>Enterobacterales</taxon>
        <taxon>Enterobacteriaceae</taxon>
        <taxon>Escherichia</taxon>
    </lineage>
</organism>
<dbReference type="EC" id="3.1.21.7" evidence="1"/>
<dbReference type="EMBL" id="CU928161">
    <property type="protein sequence ID" value="CAR05628.1"/>
    <property type="molecule type" value="Genomic_DNA"/>
</dbReference>
<dbReference type="RefSeq" id="WP_000362388.1">
    <property type="nucleotide sequence ID" value="NC_011742.1"/>
</dbReference>
<dbReference type="SMR" id="B7MIY4"/>
<dbReference type="GeneID" id="75169444"/>
<dbReference type="KEGG" id="ecz:ECS88_4459"/>
<dbReference type="HOGENOM" id="CLU_047631_1_0_6"/>
<dbReference type="BRENDA" id="3.1.21.7">
    <property type="organism ID" value="2026"/>
</dbReference>
<dbReference type="EvolutionaryTrace" id="B7MIY4"/>
<dbReference type="Proteomes" id="UP000000747">
    <property type="component" value="Chromosome"/>
</dbReference>
<dbReference type="GO" id="GO:0005737">
    <property type="term" value="C:cytoplasm"/>
    <property type="evidence" value="ECO:0007669"/>
    <property type="project" value="UniProtKB-SubCell"/>
</dbReference>
<dbReference type="GO" id="GO:0043737">
    <property type="term" value="F:deoxyribonuclease V activity"/>
    <property type="evidence" value="ECO:0007669"/>
    <property type="project" value="UniProtKB-UniRule"/>
</dbReference>
<dbReference type="GO" id="GO:0000287">
    <property type="term" value="F:magnesium ion binding"/>
    <property type="evidence" value="ECO:0007669"/>
    <property type="project" value="UniProtKB-UniRule"/>
</dbReference>
<dbReference type="GO" id="GO:0016891">
    <property type="term" value="F:RNA endonuclease activity, producing 5'-phosphomonoesters"/>
    <property type="evidence" value="ECO:0007669"/>
    <property type="project" value="TreeGrafter"/>
</dbReference>
<dbReference type="GO" id="GO:0003727">
    <property type="term" value="F:single-stranded RNA binding"/>
    <property type="evidence" value="ECO:0007669"/>
    <property type="project" value="TreeGrafter"/>
</dbReference>
<dbReference type="GO" id="GO:0006281">
    <property type="term" value="P:DNA repair"/>
    <property type="evidence" value="ECO:0007669"/>
    <property type="project" value="UniProtKB-UniRule"/>
</dbReference>
<dbReference type="CDD" id="cd06559">
    <property type="entry name" value="Endonuclease_V"/>
    <property type="match status" value="1"/>
</dbReference>
<dbReference type="FunFam" id="3.30.2170.10:FF:000001">
    <property type="entry name" value="Endonuclease V"/>
    <property type="match status" value="1"/>
</dbReference>
<dbReference type="Gene3D" id="3.30.2170.10">
    <property type="entry name" value="archaeoglobus fulgidus dsm 4304 superfamily"/>
    <property type="match status" value="1"/>
</dbReference>
<dbReference type="HAMAP" id="MF_00801">
    <property type="entry name" value="Endonuclease_5"/>
    <property type="match status" value="1"/>
</dbReference>
<dbReference type="InterPro" id="IPR007581">
    <property type="entry name" value="Endonuclease-V"/>
</dbReference>
<dbReference type="NCBIfam" id="NF008629">
    <property type="entry name" value="PRK11617.1"/>
    <property type="match status" value="1"/>
</dbReference>
<dbReference type="PANTHER" id="PTHR28511">
    <property type="entry name" value="ENDONUCLEASE V"/>
    <property type="match status" value="1"/>
</dbReference>
<dbReference type="PANTHER" id="PTHR28511:SF1">
    <property type="entry name" value="ENDONUCLEASE V"/>
    <property type="match status" value="1"/>
</dbReference>
<dbReference type="Pfam" id="PF04493">
    <property type="entry name" value="Endonuclease_5"/>
    <property type="match status" value="1"/>
</dbReference>
<sequence>MDLASLRAQQIELASSVIREDRLDKDPPDLIAGADVGFEQGGEVTRAAMVLLKYPSLELVEYKVARIATTMPYIPGFLSFREYPALLAAWEMLSQKPDLVFVDGHGISHPRRLGVASHFGLLVDVPTIGVAKKRLCGKFEPLSSEPGALAPLMDKGEQLAWVWRSKARCNPLFIATGHRVSVDSALAWVQRCMKGYRLPEPTRWADAVASERPAFVRYTANQP</sequence>
<proteinExistence type="inferred from homology"/>
<evidence type="ECO:0000255" key="1">
    <source>
        <dbReference type="HAMAP-Rule" id="MF_00801"/>
    </source>
</evidence>
<protein>
    <recommendedName>
        <fullName evidence="1">Endonuclease V</fullName>
        <ecNumber evidence="1">3.1.21.7</ecNumber>
    </recommendedName>
    <alternativeName>
        <fullName evidence="1">Deoxyinosine 3'endonuclease</fullName>
    </alternativeName>
    <alternativeName>
        <fullName evidence="1">Deoxyribonuclease V</fullName>
        <shortName evidence="1">DNase V</shortName>
    </alternativeName>
</protein>
<comment type="function">
    <text evidence="1">DNA repair enzyme involved in the repair of deaminated bases. Selectively cleaves double-stranded DNA at the second phosphodiester bond 3' to a deoxyinosine leaving behind the intact lesion on the nicked DNA.</text>
</comment>
<comment type="catalytic activity">
    <reaction evidence="1">
        <text>Endonucleolytic cleavage at apurinic or apyrimidinic sites to products with a 5'-phosphate.</text>
        <dbReference type="EC" id="3.1.21.7"/>
    </reaction>
</comment>
<comment type="cofactor">
    <cofactor evidence="1">
        <name>Mg(2+)</name>
        <dbReference type="ChEBI" id="CHEBI:18420"/>
    </cofactor>
</comment>
<comment type="subcellular location">
    <subcellularLocation>
        <location evidence="1">Cytoplasm</location>
    </subcellularLocation>
</comment>
<comment type="similarity">
    <text evidence="1">Belongs to the endonuclease V family.</text>
</comment>
<keyword id="KW-0963">Cytoplasm</keyword>
<keyword id="KW-0227">DNA damage</keyword>
<keyword id="KW-0234">DNA repair</keyword>
<keyword id="KW-0255">Endonuclease</keyword>
<keyword id="KW-0378">Hydrolase</keyword>
<keyword id="KW-0460">Magnesium</keyword>
<keyword id="KW-0479">Metal-binding</keyword>
<keyword id="KW-0540">Nuclease</keyword>
<keyword id="KW-1185">Reference proteome</keyword>
<name>NFI_ECO45</name>
<feature type="chain" id="PRO_1000133870" description="Endonuclease V">
    <location>
        <begin position="1"/>
        <end position="223"/>
    </location>
</feature>
<feature type="binding site" evidence="1">
    <location>
        <position position="35"/>
    </location>
    <ligand>
        <name>Mg(2+)</name>
        <dbReference type="ChEBI" id="CHEBI:18420"/>
    </ligand>
</feature>
<feature type="binding site" evidence="1">
    <location>
        <position position="103"/>
    </location>
    <ligand>
        <name>Mg(2+)</name>
        <dbReference type="ChEBI" id="CHEBI:18420"/>
    </ligand>
</feature>
<feature type="site" description="Interaction with target DNA" evidence="1">
    <location>
        <position position="73"/>
    </location>
</feature>
<accession>B7MIY4</accession>
<gene>
    <name evidence="1" type="primary">nfi</name>
    <name type="ordered locus">ECS88_4459</name>
</gene>
<reference key="1">
    <citation type="journal article" date="2009" name="PLoS Genet.">
        <title>Organised genome dynamics in the Escherichia coli species results in highly diverse adaptive paths.</title>
        <authorList>
            <person name="Touchon M."/>
            <person name="Hoede C."/>
            <person name="Tenaillon O."/>
            <person name="Barbe V."/>
            <person name="Baeriswyl S."/>
            <person name="Bidet P."/>
            <person name="Bingen E."/>
            <person name="Bonacorsi S."/>
            <person name="Bouchier C."/>
            <person name="Bouvet O."/>
            <person name="Calteau A."/>
            <person name="Chiapello H."/>
            <person name="Clermont O."/>
            <person name="Cruveiller S."/>
            <person name="Danchin A."/>
            <person name="Diard M."/>
            <person name="Dossat C."/>
            <person name="Karoui M.E."/>
            <person name="Frapy E."/>
            <person name="Garry L."/>
            <person name="Ghigo J.M."/>
            <person name="Gilles A.M."/>
            <person name="Johnson J."/>
            <person name="Le Bouguenec C."/>
            <person name="Lescat M."/>
            <person name="Mangenot S."/>
            <person name="Martinez-Jehanne V."/>
            <person name="Matic I."/>
            <person name="Nassif X."/>
            <person name="Oztas S."/>
            <person name="Petit M.A."/>
            <person name="Pichon C."/>
            <person name="Rouy Z."/>
            <person name="Ruf C.S."/>
            <person name="Schneider D."/>
            <person name="Tourret J."/>
            <person name="Vacherie B."/>
            <person name="Vallenet D."/>
            <person name="Medigue C."/>
            <person name="Rocha E.P.C."/>
            <person name="Denamur E."/>
        </authorList>
    </citation>
    <scope>NUCLEOTIDE SEQUENCE [LARGE SCALE GENOMIC DNA]</scope>
    <source>
        <strain>S88 / ExPEC</strain>
    </source>
</reference>